<organism>
    <name type="scientific">Campylobacter lari (strain RM2100 / D67 / ATCC BAA-1060)</name>
    <dbReference type="NCBI Taxonomy" id="306263"/>
    <lineage>
        <taxon>Bacteria</taxon>
        <taxon>Pseudomonadati</taxon>
        <taxon>Campylobacterota</taxon>
        <taxon>Epsilonproteobacteria</taxon>
        <taxon>Campylobacterales</taxon>
        <taxon>Campylobacteraceae</taxon>
        <taxon>Campylobacter</taxon>
    </lineage>
</organism>
<gene>
    <name evidence="1" type="primary">hemA</name>
    <name type="ordered locus">Cla_0770</name>
</gene>
<evidence type="ECO:0000255" key="1">
    <source>
        <dbReference type="HAMAP-Rule" id="MF_00087"/>
    </source>
</evidence>
<feature type="chain" id="PRO_1000190510" description="Glutamyl-tRNA reductase">
    <location>
        <begin position="1"/>
        <end position="435"/>
    </location>
</feature>
<feature type="active site" description="Nucleophile" evidence="1">
    <location>
        <position position="51"/>
    </location>
</feature>
<feature type="binding site" evidence="1">
    <location>
        <begin position="50"/>
        <end position="53"/>
    </location>
    <ligand>
        <name>substrate</name>
    </ligand>
</feature>
<feature type="binding site" evidence="1">
    <location>
        <position position="110"/>
    </location>
    <ligand>
        <name>substrate</name>
    </ligand>
</feature>
<feature type="binding site" evidence="1">
    <location>
        <begin position="115"/>
        <end position="117"/>
    </location>
    <ligand>
        <name>substrate</name>
    </ligand>
</feature>
<feature type="binding site" evidence="1">
    <location>
        <position position="121"/>
    </location>
    <ligand>
        <name>substrate</name>
    </ligand>
</feature>
<feature type="binding site" evidence="1">
    <location>
        <begin position="189"/>
        <end position="194"/>
    </location>
    <ligand>
        <name>NADP(+)</name>
        <dbReference type="ChEBI" id="CHEBI:58349"/>
    </ligand>
</feature>
<feature type="site" description="Important for activity" evidence="1">
    <location>
        <position position="100"/>
    </location>
</feature>
<sequence>MHYYCISFTHKNTDIATREKLSFSNEDKKRELLKLIHTNNKILESLVLSTCNRVEIFLFVGDVESINEHILKTLSLLCGVDRENLSTKADFYEDSGAIHHLFSVASSLDSLVIGETQIAGQLKDAYKFALQEQRCGVHLTRAVHYAFKCAANVRNQTEISKNPISVASVAVAKAKELVNLENKTAVVVGAGEMSELACKHLLNAKAKVLILNRDIQNAQKLCEDLGENASYESIANLKEALNQYEIFFSATNAPHAIITNDLLEEKDYSRYFFDIAVPRDIDVKANEKNIVYAVDDLEEVVRKNLTLREHQAQIAYSIVGTMTNEFFQHLSKLATLPLVKQLRLQADEIAKEQLQKAIDKGYLKHSNHEEARKLIRQVMNAFLHHPSVNLKKLSGTMQNDSVINAMRYVFDLKNENMEGLNLYKCEFNLENNHEI</sequence>
<dbReference type="EC" id="1.2.1.70" evidence="1"/>
<dbReference type="EMBL" id="CP000932">
    <property type="protein sequence ID" value="ACM64097.1"/>
    <property type="molecule type" value="Genomic_DNA"/>
</dbReference>
<dbReference type="RefSeq" id="WP_012661480.1">
    <property type="nucleotide sequence ID" value="NC_012039.1"/>
</dbReference>
<dbReference type="SMR" id="B9KGB2"/>
<dbReference type="STRING" id="306263.Cla_0770"/>
<dbReference type="KEGG" id="cla:CLA_0770"/>
<dbReference type="PATRIC" id="fig|306263.5.peg.749"/>
<dbReference type="eggNOG" id="COG0373">
    <property type="taxonomic scope" value="Bacteria"/>
</dbReference>
<dbReference type="HOGENOM" id="CLU_035113_2_2_7"/>
<dbReference type="UniPathway" id="UPA00251">
    <property type="reaction ID" value="UER00316"/>
</dbReference>
<dbReference type="Proteomes" id="UP000007727">
    <property type="component" value="Chromosome"/>
</dbReference>
<dbReference type="GO" id="GO:0008883">
    <property type="term" value="F:glutamyl-tRNA reductase activity"/>
    <property type="evidence" value="ECO:0007669"/>
    <property type="project" value="UniProtKB-UniRule"/>
</dbReference>
<dbReference type="GO" id="GO:0050661">
    <property type="term" value="F:NADP binding"/>
    <property type="evidence" value="ECO:0007669"/>
    <property type="project" value="InterPro"/>
</dbReference>
<dbReference type="GO" id="GO:0019353">
    <property type="term" value="P:protoporphyrinogen IX biosynthetic process from glutamate"/>
    <property type="evidence" value="ECO:0007669"/>
    <property type="project" value="TreeGrafter"/>
</dbReference>
<dbReference type="CDD" id="cd05213">
    <property type="entry name" value="NAD_bind_Glutamyl_tRNA_reduct"/>
    <property type="match status" value="1"/>
</dbReference>
<dbReference type="FunFam" id="3.30.460.30:FF:000001">
    <property type="entry name" value="Glutamyl-tRNA reductase"/>
    <property type="match status" value="1"/>
</dbReference>
<dbReference type="Gene3D" id="3.30.460.30">
    <property type="entry name" value="Glutamyl-tRNA reductase, N-terminal domain"/>
    <property type="match status" value="1"/>
</dbReference>
<dbReference type="Gene3D" id="3.40.50.720">
    <property type="entry name" value="NAD(P)-binding Rossmann-like Domain"/>
    <property type="match status" value="1"/>
</dbReference>
<dbReference type="HAMAP" id="MF_00087">
    <property type="entry name" value="Glu_tRNA_reductase"/>
    <property type="match status" value="1"/>
</dbReference>
<dbReference type="InterPro" id="IPR000343">
    <property type="entry name" value="4pyrrol_synth_GluRdtase"/>
</dbReference>
<dbReference type="InterPro" id="IPR015896">
    <property type="entry name" value="4pyrrol_synth_GluRdtase_dimer"/>
</dbReference>
<dbReference type="InterPro" id="IPR015895">
    <property type="entry name" value="4pyrrol_synth_GluRdtase_N"/>
</dbReference>
<dbReference type="InterPro" id="IPR018214">
    <property type="entry name" value="GluRdtase_CS"/>
</dbReference>
<dbReference type="InterPro" id="IPR036453">
    <property type="entry name" value="GluRdtase_dimer_dom_sf"/>
</dbReference>
<dbReference type="InterPro" id="IPR036343">
    <property type="entry name" value="GluRdtase_N_sf"/>
</dbReference>
<dbReference type="InterPro" id="IPR036291">
    <property type="entry name" value="NAD(P)-bd_dom_sf"/>
</dbReference>
<dbReference type="InterPro" id="IPR006151">
    <property type="entry name" value="Shikm_DH/Glu-tRNA_Rdtase"/>
</dbReference>
<dbReference type="NCBIfam" id="TIGR01035">
    <property type="entry name" value="hemA"/>
    <property type="match status" value="1"/>
</dbReference>
<dbReference type="PANTHER" id="PTHR43013">
    <property type="entry name" value="GLUTAMYL-TRNA REDUCTASE"/>
    <property type="match status" value="1"/>
</dbReference>
<dbReference type="PANTHER" id="PTHR43013:SF1">
    <property type="entry name" value="GLUTAMYL-TRNA REDUCTASE"/>
    <property type="match status" value="1"/>
</dbReference>
<dbReference type="Pfam" id="PF00745">
    <property type="entry name" value="GlutR_dimer"/>
    <property type="match status" value="1"/>
</dbReference>
<dbReference type="Pfam" id="PF05201">
    <property type="entry name" value="GlutR_N"/>
    <property type="match status" value="1"/>
</dbReference>
<dbReference type="Pfam" id="PF01488">
    <property type="entry name" value="Shikimate_DH"/>
    <property type="match status" value="1"/>
</dbReference>
<dbReference type="PIRSF" id="PIRSF000445">
    <property type="entry name" value="4pyrrol_synth_GluRdtase"/>
    <property type="match status" value="1"/>
</dbReference>
<dbReference type="SUPFAM" id="SSF69742">
    <property type="entry name" value="Glutamyl tRNA-reductase catalytic, N-terminal domain"/>
    <property type="match status" value="1"/>
</dbReference>
<dbReference type="SUPFAM" id="SSF69075">
    <property type="entry name" value="Glutamyl tRNA-reductase dimerization domain"/>
    <property type="match status" value="1"/>
</dbReference>
<dbReference type="SUPFAM" id="SSF51735">
    <property type="entry name" value="NAD(P)-binding Rossmann-fold domains"/>
    <property type="match status" value="1"/>
</dbReference>
<dbReference type="PROSITE" id="PS00747">
    <property type="entry name" value="GLUTR"/>
    <property type="match status" value="1"/>
</dbReference>
<protein>
    <recommendedName>
        <fullName evidence="1">Glutamyl-tRNA reductase</fullName>
        <shortName evidence="1">GluTR</shortName>
        <ecNumber evidence="1">1.2.1.70</ecNumber>
    </recommendedName>
</protein>
<keyword id="KW-0521">NADP</keyword>
<keyword id="KW-0560">Oxidoreductase</keyword>
<keyword id="KW-0627">Porphyrin biosynthesis</keyword>
<keyword id="KW-1185">Reference proteome</keyword>
<reference key="1">
    <citation type="journal article" date="2008" name="Foodborne Pathog. Dis.">
        <title>The complete genome sequence and analysis of the human pathogen Campylobacter lari.</title>
        <authorList>
            <person name="Miller W.G."/>
            <person name="Wang G."/>
            <person name="Binnewies T.T."/>
            <person name="Parker C.T."/>
        </authorList>
    </citation>
    <scope>NUCLEOTIDE SEQUENCE [LARGE SCALE GENOMIC DNA]</scope>
    <source>
        <strain>RM2100 / D67 / ATCC BAA-1060</strain>
    </source>
</reference>
<comment type="function">
    <text evidence="1">Catalyzes the NADPH-dependent reduction of glutamyl-tRNA(Glu) to glutamate 1-semialdehyde (GSA).</text>
</comment>
<comment type="catalytic activity">
    <reaction evidence="1">
        <text>(S)-4-amino-5-oxopentanoate + tRNA(Glu) + NADP(+) = L-glutamyl-tRNA(Glu) + NADPH + H(+)</text>
        <dbReference type="Rhea" id="RHEA:12344"/>
        <dbReference type="Rhea" id="RHEA-COMP:9663"/>
        <dbReference type="Rhea" id="RHEA-COMP:9680"/>
        <dbReference type="ChEBI" id="CHEBI:15378"/>
        <dbReference type="ChEBI" id="CHEBI:57501"/>
        <dbReference type="ChEBI" id="CHEBI:57783"/>
        <dbReference type="ChEBI" id="CHEBI:58349"/>
        <dbReference type="ChEBI" id="CHEBI:78442"/>
        <dbReference type="ChEBI" id="CHEBI:78520"/>
        <dbReference type="EC" id="1.2.1.70"/>
    </reaction>
</comment>
<comment type="pathway">
    <text evidence="1">Porphyrin-containing compound metabolism; protoporphyrin-IX biosynthesis; 5-aminolevulinate from L-glutamyl-tRNA(Glu): step 1/2.</text>
</comment>
<comment type="subunit">
    <text evidence="1">Homodimer.</text>
</comment>
<comment type="domain">
    <text evidence="1">Possesses an unusual extended V-shaped dimeric structure with each monomer consisting of three distinct domains arranged along a curved 'spinal' alpha-helix. The N-terminal catalytic domain specifically recognizes the glutamate moiety of the substrate. The second domain is the NADPH-binding domain, and the third C-terminal domain is responsible for dimerization.</text>
</comment>
<comment type="miscellaneous">
    <text evidence="1">During catalysis, the active site Cys acts as a nucleophile attacking the alpha-carbonyl group of tRNA-bound glutamate with the formation of a thioester intermediate between enzyme and glutamate, and the concomitant release of tRNA(Glu). The thioester intermediate is finally reduced by direct hydride transfer from NADPH, to form the product GSA.</text>
</comment>
<comment type="similarity">
    <text evidence="1">Belongs to the glutamyl-tRNA reductase family.</text>
</comment>
<proteinExistence type="inferred from homology"/>
<name>HEM1_CAMLR</name>
<accession>B9KGB2</accession>